<name>OSGI2_HUMAN</name>
<protein>
    <recommendedName>
        <fullName>Oxidative stress-induced growth inhibitor 2</fullName>
    </recommendedName>
    <alternativeName>
        <fullName>hT41</fullName>
    </alternativeName>
</protein>
<sequence>MPLVEETSLLEDSSVTFPVVIIGNGPSGICLSYMLSGYRPYLSSEAIHPNTILNSKLEEARHLSIVDQDLEYLSEGLEGRSSNPVAVLFDTLLHPDADFGYDYPSVLHWKLEQHHYIPHVVLGKGPPGGAWHNMEGSMLTISFGSWMELPGLKFKDWVSSKRRSLKGDRVMPEEIARYYKHYVKVMGLQKNFRENTYITSVSRLYRDQDDDDIQDRDISTKHLQIEKSNFIKRNWEIRGYQRIADGSHVPFCLFAENVALATGTLDSPAHLEIEGEDFPFVFHSMPEFGAAINKGKLRGKVDPVLIVGSGLTAADAVLCAYNSNIPVIHVFRRRVTDPSLIFKQLPKKLYPEYHKVYHMMCTQSYSVDSNLLSDYTSFPEHRVLSFKSDMKCVLQSVSGLKKIFKLSAAVVLIGSHPNLSFLKDQGCYLGHKSSQPITCKGNPVEIDTYTYECIKEANLFALGPLVGDNFVRFLKGGALGVTRCLATRQKKKHLFVERGGGDGIA</sequence>
<accession>Q9Y236</accession>
<dbReference type="EMBL" id="AF061326">
    <property type="protein sequence ID" value="AAD18134.1"/>
    <property type="molecule type" value="mRNA"/>
</dbReference>
<dbReference type="EMBL" id="AF069291">
    <property type="protein sequence ID" value="AAC62231.1"/>
    <property type="molecule type" value="Genomic_DNA"/>
</dbReference>
<dbReference type="EMBL" id="AF117829">
    <property type="status" value="NOT_ANNOTATED_CDS"/>
    <property type="molecule type" value="Genomic_DNA"/>
</dbReference>
<dbReference type="EMBL" id="BC031054">
    <property type="protein sequence ID" value="AAH31054.2"/>
    <property type="status" value="ALT_SEQ"/>
    <property type="molecule type" value="mRNA"/>
</dbReference>
<dbReference type="CCDS" id="CCDS47888.1">
    <molecule id="Q9Y236-2"/>
</dbReference>
<dbReference type="CCDS" id="CCDS6248.1">
    <molecule id="Q9Y236-1"/>
</dbReference>
<dbReference type="RefSeq" id="NP_001119583.1">
    <molecule id="Q9Y236-2"/>
    <property type="nucleotide sequence ID" value="NM_001126111.3"/>
</dbReference>
<dbReference type="RefSeq" id="NP_004328.1">
    <molecule id="Q9Y236-1"/>
    <property type="nucleotide sequence ID" value="NM_004337.2"/>
</dbReference>
<dbReference type="RefSeq" id="XP_011515589.1">
    <molecule id="Q9Y236-1"/>
    <property type="nucleotide sequence ID" value="XM_011517287.4"/>
</dbReference>
<dbReference type="RefSeq" id="XP_054217153.1">
    <molecule id="Q9Y236-1"/>
    <property type="nucleotide sequence ID" value="XM_054361178.1"/>
</dbReference>
<dbReference type="BioGRID" id="107195">
    <property type="interactions" value="4"/>
</dbReference>
<dbReference type="FunCoup" id="Q9Y236">
    <property type="interactions" value="91"/>
</dbReference>
<dbReference type="IntAct" id="Q9Y236">
    <property type="interactions" value="1"/>
</dbReference>
<dbReference type="STRING" id="9606.ENSP00000396445"/>
<dbReference type="iPTMnet" id="Q9Y236"/>
<dbReference type="PhosphoSitePlus" id="Q9Y236"/>
<dbReference type="BioMuta" id="OSGIN2"/>
<dbReference type="DMDM" id="11386718"/>
<dbReference type="jPOST" id="Q9Y236"/>
<dbReference type="MassIVE" id="Q9Y236"/>
<dbReference type="PaxDb" id="9606-ENSP00000396445"/>
<dbReference type="PeptideAtlas" id="Q9Y236"/>
<dbReference type="ProteomicsDB" id="85629">
    <molecule id="Q9Y236-1"/>
</dbReference>
<dbReference type="ProteomicsDB" id="85630">
    <molecule id="Q9Y236-2"/>
</dbReference>
<dbReference type="Antibodypedia" id="25576">
    <property type="antibodies" value="143 antibodies from 16 providers"/>
</dbReference>
<dbReference type="DNASU" id="734"/>
<dbReference type="Ensembl" id="ENST00000297438.6">
    <molecule id="Q9Y236-1"/>
    <property type="protein sequence ID" value="ENSP00000297438.2"/>
    <property type="gene ID" value="ENSG00000164823.11"/>
</dbReference>
<dbReference type="Ensembl" id="ENST00000451899.7">
    <molecule id="Q9Y236-2"/>
    <property type="protein sequence ID" value="ENSP00000396445.2"/>
    <property type="gene ID" value="ENSG00000164823.11"/>
</dbReference>
<dbReference type="Ensembl" id="ENST00000647849.1">
    <molecule id="Q9Y236-1"/>
    <property type="protein sequence ID" value="ENSP00000497119.1"/>
    <property type="gene ID" value="ENSG00000164823.11"/>
</dbReference>
<dbReference type="GeneID" id="734"/>
<dbReference type="KEGG" id="hsa:734"/>
<dbReference type="MANE-Select" id="ENST00000451899.7">
    <molecule id="Q9Y236-2"/>
    <property type="protein sequence ID" value="ENSP00000396445.2"/>
    <property type="RefSeq nucleotide sequence ID" value="NM_001126111.3"/>
    <property type="RefSeq protein sequence ID" value="NP_001119583.1"/>
</dbReference>
<dbReference type="UCSC" id="uc003yeg.4">
    <molecule id="Q9Y236-1"/>
    <property type="organism name" value="human"/>
</dbReference>
<dbReference type="AGR" id="HGNC:1355"/>
<dbReference type="CTD" id="734"/>
<dbReference type="DisGeNET" id="734"/>
<dbReference type="GeneCards" id="OSGIN2"/>
<dbReference type="HGNC" id="HGNC:1355">
    <property type="gene designation" value="OSGIN2"/>
</dbReference>
<dbReference type="HPA" id="ENSG00000164823">
    <property type="expression patterns" value="Low tissue specificity"/>
</dbReference>
<dbReference type="MIM" id="604598">
    <property type="type" value="gene"/>
</dbReference>
<dbReference type="neXtProt" id="NX_Q9Y236"/>
<dbReference type="OpenTargets" id="ENSG00000164823"/>
<dbReference type="PharmGKB" id="PA162398506"/>
<dbReference type="VEuPathDB" id="HostDB:ENSG00000164823"/>
<dbReference type="eggNOG" id="ENOG502QRUQ">
    <property type="taxonomic scope" value="Eukaryota"/>
</dbReference>
<dbReference type="GeneTree" id="ENSGT00390000006658"/>
<dbReference type="HOGENOM" id="CLU_019308_2_0_1"/>
<dbReference type="InParanoid" id="Q9Y236"/>
<dbReference type="OMA" id="CCRCSLT"/>
<dbReference type="OrthoDB" id="412005at2759"/>
<dbReference type="PAN-GO" id="Q9Y236">
    <property type="GO annotations" value="2 GO annotations based on evolutionary models"/>
</dbReference>
<dbReference type="PhylomeDB" id="Q9Y236"/>
<dbReference type="TreeFam" id="TF313502"/>
<dbReference type="PathwayCommons" id="Q9Y236"/>
<dbReference type="SignaLink" id="Q9Y236"/>
<dbReference type="BioGRID-ORCS" id="734">
    <property type="hits" value="12 hits in 1155 CRISPR screens"/>
</dbReference>
<dbReference type="ChiTaRS" id="OSGIN2">
    <property type="organism name" value="human"/>
</dbReference>
<dbReference type="GenomeRNAi" id="734"/>
<dbReference type="Pharos" id="Q9Y236">
    <property type="development level" value="Tbio"/>
</dbReference>
<dbReference type="PRO" id="PR:Q9Y236"/>
<dbReference type="Proteomes" id="UP000005640">
    <property type="component" value="Chromosome 8"/>
</dbReference>
<dbReference type="RNAct" id="Q9Y236">
    <property type="molecule type" value="protein"/>
</dbReference>
<dbReference type="Bgee" id="ENSG00000164823">
    <property type="expression patterns" value="Expressed in sperm and 155 other cell types or tissues"/>
</dbReference>
<dbReference type="ExpressionAtlas" id="Q9Y236">
    <property type="expression patterns" value="baseline and differential"/>
</dbReference>
<dbReference type="GO" id="GO:0008083">
    <property type="term" value="F:growth factor activity"/>
    <property type="evidence" value="ECO:0000318"/>
    <property type="project" value="GO_Central"/>
</dbReference>
<dbReference type="GO" id="GO:0051321">
    <property type="term" value="P:meiotic cell cycle"/>
    <property type="evidence" value="ECO:0007669"/>
    <property type="project" value="UniProtKB-KW"/>
</dbReference>
<dbReference type="GO" id="GO:0030308">
    <property type="term" value="P:negative regulation of cell growth"/>
    <property type="evidence" value="ECO:0000318"/>
    <property type="project" value="GO_Central"/>
</dbReference>
<dbReference type="FunFam" id="3.50.50.60:FF:000087">
    <property type="entry name" value="oxidative stress-induced growth inhibitor 2 isoform X2"/>
    <property type="match status" value="1"/>
</dbReference>
<dbReference type="Gene3D" id="3.50.50.60">
    <property type="entry name" value="FAD/NAD(P)-binding domain"/>
    <property type="match status" value="1"/>
</dbReference>
<dbReference type="InterPro" id="IPR036188">
    <property type="entry name" value="FAD/NAD-bd_sf"/>
</dbReference>
<dbReference type="InterPro" id="IPR029731">
    <property type="entry name" value="OKL38_fam"/>
</dbReference>
<dbReference type="PANTHER" id="PTHR15192:SF4">
    <property type="entry name" value="OXIDATIVE STRESS-INDUCED GROWTH INHIBITOR 2"/>
    <property type="match status" value="1"/>
</dbReference>
<dbReference type="PANTHER" id="PTHR15192">
    <property type="entry name" value="PROTEIN CBG05349"/>
    <property type="match status" value="1"/>
</dbReference>
<dbReference type="SUPFAM" id="SSF51905">
    <property type="entry name" value="FAD/NAD(P)-binding domain"/>
    <property type="match status" value="1"/>
</dbReference>
<feature type="chain" id="PRO_0000165372" description="Oxidative stress-induced growth inhibitor 2">
    <location>
        <begin position="1"/>
        <end position="505"/>
    </location>
</feature>
<feature type="splice variant" id="VSP_041210" description="In isoform 2." evidence="2">
    <original>M</original>
    <variation>MPVWCCRCSLAGHFRNYSDTETEGEIFNSLVQYFGDNLGRKVKAM</variation>
    <location>
        <position position="1"/>
    </location>
</feature>
<feature type="sequence variant" id="VAR_050421" description="In dbSNP:rs35542900.">
    <original>Y</original>
    <variation>H</variation>
    <location>
        <position position="101"/>
    </location>
</feature>
<feature type="sequence variant" id="VAR_050422" description="In dbSNP:rs35599414.">
    <original>C</original>
    <variation>S</variation>
    <location>
        <position position="319"/>
    </location>
</feature>
<keyword id="KW-0025">Alternative splicing</keyword>
<keyword id="KW-0274">FAD</keyword>
<keyword id="KW-0285">Flavoprotein</keyword>
<keyword id="KW-0469">Meiosis</keyword>
<keyword id="KW-0503">Monooxygenase</keyword>
<keyword id="KW-0521">NADP</keyword>
<keyword id="KW-0560">Oxidoreductase</keyword>
<keyword id="KW-1267">Proteomics identification</keyword>
<keyword id="KW-1185">Reference proteome</keyword>
<evidence type="ECO:0000250" key="1">
    <source>
        <dbReference type="UniProtKB" id="Q9UJX0"/>
    </source>
</evidence>
<evidence type="ECO:0000303" key="2">
    <source>
    </source>
</evidence>
<evidence type="ECO:0000305" key="3"/>
<evidence type="ECO:0000312" key="4">
    <source>
        <dbReference type="HGNC" id="HGNC:1355"/>
    </source>
</evidence>
<gene>
    <name evidence="4" type="primary">OSGIN2</name>
    <name evidence="4" type="synonym">C8orf1</name>
</gene>
<proteinExistence type="evidence at protein level"/>
<reference key="1">
    <citation type="journal article" date="1999" name="Genomics">
        <title>Sequence analysis of an 800-kb genomic DNA region on chromosome 8q21 that contains the Nijmegen breakage syndrome gene, NBS1.</title>
        <authorList>
            <person name="Tauchi H."/>
            <person name="Matsuura S."/>
            <person name="Isomura M."/>
            <person name="Kinjo T."/>
            <person name="Nakamura A."/>
            <person name="Sakamoto S."/>
            <person name="Kondo N."/>
            <person name="Endo S."/>
            <person name="Komatsu K."/>
            <person name="Nakamura Y."/>
        </authorList>
    </citation>
    <scope>NUCLEOTIDE SEQUENCE [GENOMIC DNA / MRNA] (ISOFORM 1)</scope>
    <source>
        <tissue>Testis</tissue>
    </source>
</reference>
<reference key="2">
    <citation type="journal article" date="2006" name="Nature">
        <title>DNA sequence and analysis of human chromosome 8.</title>
        <authorList>
            <person name="Nusbaum C."/>
            <person name="Mikkelsen T.S."/>
            <person name="Zody M.C."/>
            <person name="Asakawa S."/>
            <person name="Taudien S."/>
            <person name="Garber M."/>
            <person name="Kodira C.D."/>
            <person name="Schueler M.G."/>
            <person name="Shimizu A."/>
            <person name="Whittaker C.A."/>
            <person name="Chang J.L."/>
            <person name="Cuomo C.A."/>
            <person name="Dewar K."/>
            <person name="FitzGerald M.G."/>
            <person name="Yang X."/>
            <person name="Allen N.R."/>
            <person name="Anderson S."/>
            <person name="Asakawa T."/>
            <person name="Blechschmidt K."/>
            <person name="Bloom T."/>
            <person name="Borowsky M.L."/>
            <person name="Butler J."/>
            <person name="Cook A."/>
            <person name="Corum B."/>
            <person name="DeArellano K."/>
            <person name="DeCaprio D."/>
            <person name="Dooley K.T."/>
            <person name="Dorris L. III"/>
            <person name="Engels R."/>
            <person name="Gloeckner G."/>
            <person name="Hafez N."/>
            <person name="Hagopian D.S."/>
            <person name="Hall J.L."/>
            <person name="Ishikawa S.K."/>
            <person name="Jaffe D.B."/>
            <person name="Kamat A."/>
            <person name="Kudoh J."/>
            <person name="Lehmann R."/>
            <person name="Lokitsang T."/>
            <person name="Macdonald P."/>
            <person name="Major J.E."/>
            <person name="Matthews C.D."/>
            <person name="Mauceli E."/>
            <person name="Menzel U."/>
            <person name="Mihalev A.H."/>
            <person name="Minoshima S."/>
            <person name="Murayama Y."/>
            <person name="Naylor J.W."/>
            <person name="Nicol R."/>
            <person name="Nguyen C."/>
            <person name="O'Leary S.B."/>
            <person name="O'Neill K."/>
            <person name="Parker S.C.J."/>
            <person name="Polley A."/>
            <person name="Raymond C.K."/>
            <person name="Reichwald K."/>
            <person name="Rodriguez J."/>
            <person name="Sasaki T."/>
            <person name="Schilhabel M."/>
            <person name="Siddiqui R."/>
            <person name="Smith C.L."/>
            <person name="Sneddon T.P."/>
            <person name="Talamas J.A."/>
            <person name="Tenzin P."/>
            <person name="Topham K."/>
            <person name="Venkataraman V."/>
            <person name="Wen G."/>
            <person name="Yamazaki S."/>
            <person name="Young S.K."/>
            <person name="Zeng Q."/>
            <person name="Zimmer A.R."/>
            <person name="Rosenthal A."/>
            <person name="Birren B.W."/>
            <person name="Platzer M."/>
            <person name="Shimizu N."/>
            <person name="Lander E.S."/>
        </authorList>
    </citation>
    <scope>NUCLEOTIDE SEQUENCE [LARGE SCALE GENOMIC DNA]</scope>
</reference>
<reference key="3">
    <citation type="journal article" date="2004" name="Genome Res.">
        <title>The status, quality, and expansion of the NIH full-length cDNA project: the Mammalian Gene Collection (MGC).</title>
        <authorList>
            <consortium name="The MGC Project Team"/>
        </authorList>
    </citation>
    <scope>NUCLEOTIDE SEQUENCE [LARGE SCALE MRNA] (ISOFORM 2)</scope>
    <source>
        <tissue>Testis</tissue>
    </source>
</reference>
<organism>
    <name type="scientific">Homo sapiens</name>
    <name type="common">Human</name>
    <dbReference type="NCBI Taxonomy" id="9606"/>
    <lineage>
        <taxon>Eukaryota</taxon>
        <taxon>Metazoa</taxon>
        <taxon>Chordata</taxon>
        <taxon>Craniata</taxon>
        <taxon>Vertebrata</taxon>
        <taxon>Euteleostomi</taxon>
        <taxon>Mammalia</taxon>
        <taxon>Eutheria</taxon>
        <taxon>Euarchontoglires</taxon>
        <taxon>Primates</taxon>
        <taxon>Haplorrhini</taxon>
        <taxon>Catarrhini</taxon>
        <taxon>Hominidae</taxon>
        <taxon>Homo</taxon>
    </lineage>
</organism>
<comment type="function">
    <text evidence="1">Monooxygenase catalytic activity (By similarity). May be involved in meiosis or the maturation of germ cells.</text>
</comment>
<comment type="cofactor">
    <cofactor evidence="1">
        <name>NADPH</name>
        <dbReference type="ChEBI" id="CHEBI:57783"/>
    </cofactor>
    <text evidence="1">No monooxygenase catalytic activity in the absence of NADPH.</text>
</comment>
<comment type="subcellular location">
    <subcellularLocation>
        <location evidence="1">Midbody</location>
    </subcellularLocation>
    <text evidence="1">Localizes to the midbody in late cytokinesis.</text>
</comment>
<comment type="alternative products">
    <event type="alternative splicing"/>
    <isoform>
        <id>Q9Y236-1</id>
        <name>1</name>
        <sequence type="displayed"/>
    </isoform>
    <isoform>
        <id>Q9Y236-2</id>
        <name>2</name>
        <sequence type="described" ref="VSP_041210"/>
    </isoform>
</comment>
<comment type="tissue specificity">
    <text>Ubiquitous. Expressed at higher levels in testis and ovary.</text>
</comment>
<comment type="similarity">
    <text evidence="3">Belongs to the OKL38 family.</text>
</comment>
<comment type="sequence caution" evidence="3">
    <conflict type="erroneous initiation">
        <sequence resource="EMBL-CDS" id="AAH31054"/>
    </conflict>
    <text>Extended N-terminus.</text>
</comment>
<comment type="sequence caution" evidence="3">
    <molecule>Isoform 2</molecule>
    <conflict type="frameshift">
        <sequence resource="EMBL-CDS" id="AAH31054"/>
    </conflict>
</comment>